<dbReference type="EC" id="2.5.1.18"/>
<dbReference type="EMBL" id="AF071160">
    <property type="protein sequence ID" value="AAC79992.1"/>
    <property type="status" value="ALT_FRAME"/>
    <property type="molecule type" value="Genomic_DNA"/>
</dbReference>
<dbReference type="EMBL" id="AF071163">
    <property type="protein sequence ID" value="AAC79999.1"/>
    <property type="status" value="ALT_FRAME"/>
    <property type="molecule type" value="mRNA"/>
</dbReference>
<dbReference type="EMBL" id="AAAB01008880">
    <property type="protein sequence ID" value="EAL40658.2"/>
    <property type="molecule type" value="Genomic_DNA"/>
</dbReference>
<dbReference type="RefSeq" id="XP_562680.2">
    <property type="nucleotide sequence ID" value="XM_562680.2"/>
</dbReference>
<dbReference type="SMR" id="O77462"/>
<dbReference type="STRING" id="7165.O77462"/>
<dbReference type="EnsemblMetazoa" id="AGAP004164-RD">
    <molecule id="O77462-1"/>
    <property type="protein sequence ID" value="AGAP004164-PD"/>
    <property type="gene ID" value="AGAP004164"/>
</dbReference>
<dbReference type="GeneID" id="1273988"/>
<dbReference type="VEuPathDB" id="VectorBase:AGAMI1_006046"/>
<dbReference type="VEuPathDB" id="VectorBase:AGAP004164"/>
<dbReference type="InParanoid" id="O77462"/>
<dbReference type="Proteomes" id="UP000007062">
    <property type="component" value="Chromosome 2R"/>
</dbReference>
<dbReference type="GO" id="GO:0005576">
    <property type="term" value="C:extracellular region"/>
    <property type="evidence" value="ECO:0000250"/>
    <property type="project" value="UniProtKB"/>
</dbReference>
<dbReference type="GO" id="GO:0004364">
    <property type="term" value="F:glutathione transferase activity"/>
    <property type="evidence" value="ECO:0000250"/>
    <property type="project" value="UniProtKB"/>
</dbReference>
<dbReference type="GO" id="GO:0006749">
    <property type="term" value="P:glutathione metabolic process"/>
    <property type="evidence" value="ECO:0000250"/>
    <property type="project" value="UniProtKB"/>
</dbReference>
<dbReference type="CDD" id="cd03177">
    <property type="entry name" value="GST_C_Delta_Epsilon"/>
    <property type="match status" value="1"/>
</dbReference>
<dbReference type="CDD" id="cd03045">
    <property type="entry name" value="GST_N_Delta_Epsilon"/>
    <property type="match status" value="1"/>
</dbReference>
<dbReference type="FunFam" id="3.40.30.10:FF:000034">
    <property type="entry name" value="glutathione S-transferase 1"/>
    <property type="match status" value="1"/>
</dbReference>
<dbReference type="FunFam" id="1.20.1050.10:FF:000007">
    <property type="entry name" value="Glutathione S-transferase 1-1"/>
    <property type="match status" value="1"/>
</dbReference>
<dbReference type="Gene3D" id="1.20.1050.10">
    <property type="match status" value="1"/>
</dbReference>
<dbReference type="Gene3D" id="3.40.30.10">
    <property type="entry name" value="Glutaredoxin"/>
    <property type="match status" value="1"/>
</dbReference>
<dbReference type="InterPro" id="IPR010987">
    <property type="entry name" value="Glutathione-S-Trfase_C-like"/>
</dbReference>
<dbReference type="InterPro" id="IPR036282">
    <property type="entry name" value="Glutathione-S-Trfase_C_sf"/>
</dbReference>
<dbReference type="InterPro" id="IPR004045">
    <property type="entry name" value="Glutathione_S-Trfase_N"/>
</dbReference>
<dbReference type="InterPro" id="IPR036249">
    <property type="entry name" value="Thioredoxin-like_sf"/>
</dbReference>
<dbReference type="PANTHER" id="PTHR43969">
    <property type="entry name" value="GLUTATHIONE S TRANSFERASE D10, ISOFORM A-RELATED"/>
    <property type="match status" value="1"/>
</dbReference>
<dbReference type="PANTHER" id="PTHR43969:SF9">
    <property type="entry name" value="GLUTATHIONE S TRANSFERASE D10, ISOFORM A-RELATED"/>
    <property type="match status" value="1"/>
</dbReference>
<dbReference type="Pfam" id="PF02798">
    <property type="entry name" value="GST_N"/>
    <property type="match status" value="1"/>
</dbReference>
<dbReference type="SFLD" id="SFLDG01153">
    <property type="entry name" value="Main.4:_Theta-like"/>
    <property type="match status" value="1"/>
</dbReference>
<dbReference type="SFLD" id="SFLDG00358">
    <property type="entry name" value="Main_(cytGST)"/>
    <property type="match status" value="1"/>
</dbReference>
<dbReference type="SUPFAM" id="SSF47616">
    <property type="entry name" value="GST C-terminal domain-like"/>
    <property type="match status" value="1"/>
</dbReference>
<dbReference type="SUPFAM" id="SSF52833">
    <property type="entry name" value="Thioredoxin-like"/>
    <property type="match status" value="1"/>
</dbReference>
<dbReference type="PROSITE" id="PS50405">
    <property type="entry name" value="GST_CTER"/>
    <property type="match status" value="1"/>
</dbReference>
<dbReference type="PROSITE" id="PS50404">
    <property type="entry name" value="GST_NTER"/>
    <property type="match status" value="1"/>
</dbReference>
<evidence type="ECO:0000250" key="1"/>
<evidence type="ECO:0000250" key="2">
    <source>
        <dbReference type="UniProtKB" id="P30711"/>
    </source>
</evidence>
<evidence type="ECO:0000255" key="3"/>
<evidence type="ECO:0000269" key="4">
    <source>
    </source>
</evidence>
<evidence type="ECO:0000303" key="5">
    <source>
    </source>
</evidence>
<evidence type="ECO:0000305" key="6"/>
<evidence type="ECO:0000312" key="7">
    <source>
        <dbReference type="EMBL" id="AAC79992.1"/>
    </source>
</evidence>
<evidence type="ECO:0000312" key="8">
    <source>
        <dbReference type="EMBL" id="AAC79999.1"/>
    </source>
</evidence>
<gene>
    <name evidence="5" type="primary">GstD1</name>
    <name evidence="7" type="synonym">GST1a</name>
    <name type="ORF">AGAP004164</name>
</gene>
<sequence>MDFYYLPGSAPCRAVQMTAAAVGVELNLKLTDLMKGEHMKPEFLKLNPQHCIPTLVDEDGFVLWESRAIQIYLVEKYCAHDPALAERLYPGDPRRRAVVHQRLFFDVAILYQRFAEYYYPQIFGKKVAGDPDRLRSMEQALEFLNTFLEGERFVAGGDDPTIADFSILACILDCNVRRCRVRSAAI</sequence>
<keyword id="KW-0025">Alternative splicing</keyword>
<keyword id="KW-1185">Reference proteome</keyword>
<keyword id="KW-0808">Transferase</keyword>
<reference evidence="6 8" key="1">
    <citation type="journal article" date="1998" name="Proc. Natl. Acad. Sci. U.S.A.">
        <title>The role of alternative mRNA splicing in generating heterogeneity within the Anopheles gambiae class I glutathione S-transferase family.</title>
        <authorList>
            <person name="Ranson H."/>
            <person name="Collins F.H."/>
            <person name="Hemingway J."/>
        </authorList>
    </citation>
    <scope>NUCLEOTIDE SEQUENCE [GENOMIC DNA / MRNA]</scope>
    <scope>ALTERNATIVE SPLICING</scope>
    <source>
        <strain evidence="8">ZAN/U</strain>
    </source>
</reference>
<reference key="2">
    <citation type="journal article" date="2002" name="Science">
        <title>The genome sequence of the malaria mosquito Anopheles gambiae.</title>
        <authorList>
            <person name="Holt R.A."/>
            <person name="Subramanian G.M."/>
            <person name="Halpern A."/>
            <person name="Sutton G.G."/>
            <person name="Charlab R."/>
            <person name="Nusskern D.R."/>
            <person name="Wincker P."/>
            <person name="Clark A.G."/>
            <person name="Ribeiro J.M.C."/>
            <person name="Wides R."/>
            <person name="Salzberg S.L."/>
            <person name="Loftus B.J."/>
            <person name="Yandell M.D."/>
            <person name="Majoros W.H."/>
            <person name="Rusch D.B."/>
            <person name="Lai Z."/>
            <person name="Kraft C.L."/>
            <person name="Abril J.F."/>
            <person name="Anthouard V."/>
            <person name="Arensburger P."/>
            <person name="Atkinson P.W."/>
            <person name="Baden H."/>
            <person name="de Berardinis V."/>
            <person name="Baldwin D."/>
            <person name="Benes V."/>
            <person name="Biedler J."/>
            <person name="Blass C."/>
            <person name="Bolanos R."/>
            <person name="Boscus D."/>
            <person name="Barnstead M."/>
            <person name="Cai S."/>
            <person name="Center A."/>
            <person name="Chaturverdi K."/>
            <person name="Christophides G.K."/>
            <person name="Chrystal M.A.M."/>
            <person name="Clamp M."/>
            <person name="Cravchik A."/>
            <person name="Curwen V."/>
            <person name="Dana A."/>
            <person name="Delcher A."/>
            <person name="Dew I."/>
            <person name="Evans C.A."/>
            <person name="Flanigan M."/>
            <person name="Grundschober-Freimoser A."/>
            <person name="Friedli L."/>
            <person name="Gu Z."/>
            <person name="Guan P."/>
            <person name="Guigo R."/>
            <person name="Hillenmeyer M.E."/>
            <person name="Hladun S.L."/>
            <person name="Hogan J.R."/>
            <person name="Hong Y.S."/>
            <person name="Hoover J."/>
            <person name="Jaillon O."/>
            <person name="Ke Z."/>
            <person name="Kodira C.D."/>
            <person name="Kokoza E."/>
            <person name="Koutsos A."/>
            <person name="Letunic I."/>
            <person name="Levitsky A.A."/>
            <person name="Liang Y."/>
            <person name="Lin J.-J."/>
            <person name="Lobo N.F."/>
            <person name="Lopez J.R."/>
            <person name="Malek J.A."/>
            <person name="McIntosh T.C."/>
            <person name="Meister S."/>
            <person name="Miller J.R."/>
            <person name="Mobarry C."/>
            <person name="Mongin E."/>
            <person name="Murphy S.D."/>
            <person name="O'Brochta D.A."/>
            <person name="Pfannkoch C."/>
            <person name="Qi R."/>
            <person name="Regier M.A."/>
            <person name="Remington K."/>
            <person name="Shao H."/>
            <person name="Sharakhova M.V."/>
            <person name="Sitter C.D."/>
            <person name="Shetty J."/>
            <person name="Smith T.J."/>
            <person name="Strong R."/>
            <person name="Sun J."/>
            <person name="Thomasova D."/>
            <person name="Ton L.Q."/>
            <person name="Topalis P."/>
            <person name="Tu Z.J."/>
            <person name="Unger M.F."/>
            <person name="Walenz B."/>
            <person name="Wang A.H."/>
            <person name="Wang J."/>
            <person name="Wang M."/>
            <person name="Wang X."/>
            <person name="Woodford K.J."/>
            <person name="Wortman J.R."/>
            <person name="Wu M."/>
            <person name="Yao A."/>
            <person name="Zdobnov E.M."/>
            <person name="Zhang H."/>
            <person name="Zhao Q."/>
            <person name="Zhao S."/>
            <person name="Zhu S.C."/>
            <person name="Zhimulev I."/>
            <person name="Coluzzi M."/>
            <person name="della Torre A."/>
            <person name="Roth C.W."/>
            <person name="Louis C."/>
            <person name="Kalush F."/>
            <person name="Mural R.J."/>
            <person name="Myers E.W."/>
            <person name="Adams M.D."/>
            <person name="Smith H.O."/>
            <person name="Broder S."/>
            <person name="Gardner M.J."/>
            <person name="Fraser C.M."/>
            <person name="Birney E."/>
            <person name="Bork P."/>
            <person name="Brey P.T."/>
            <person name="Venter J.C."/>
            <person name="Weissenbach J."/>
            <person name="Kafatos F.C."/>
            <person name="Collins F.H."/>
            <person name="Hoffman S.L."/>
        </authorList>
    </citation>
    <scope>NUCLEOTIDE SEQUENCE [LARGE SCALE GENOMIC DNA]</scope>
    <source>
        <strain>PEST</strain>
    </source>
</reference>
<name>GST1A_ANOGA</name>
<feature type="chain" id="PRO_0000283092" description="Glutathione S-transferase 1, isoform A">
    <location>
        <begin position="1"/>
        <end position="186"/>
    </location>
</feature>
<feature type="domain" description="GST N-terminal">
    <location>
        <begin position="1"/>
        <end position="81"/>
    </location>
</feature>
<feature type="domain" description="GST C-terminal">
    <location>
        <begin position="92"/>
        <end position="186"/>
    </location>
</feature>
<feature type="binding site" evidence="1">
    <location>
        <position position="9"/>
    </location>
    <ligand>
        <name>glutathione</name>
        <dbReference type="ChEBI" id="CHEBI:57925"/>
    </ligand>
</feature>
<feature type="binding site" evidence="1">
    <location>
        <begin position="50"/>
        <end position="52"/>
    </location>
    <ligand>
        <name>glutathione</name>
        <dbReference type="ChEBI" id="CHEBI:57925"/>
    </ligand>
</feature>
<feature type="binding site" evidence="1">
    <location>
        <begin position="65"/>
        <end position="67"/>
    </location>
    <ligand>
        <name>glutathione</name>
        <dbReference type="ChEBI" id="CHEBI:57925"/>
    </ligand>
</feature>
<feature type="sequence conflict" description="In Ref. 1; AAC79992/AAC79999." evidence="6" ref="1">
    <location>
        <begin position="170"/>
        <end position="171"/>
    </location>
</feature>
<protein>
    <recommendedName>
        <fullName>Glutathione S-transferase 1, isoform A</fullName>
        <ecNumber>2.5.1.18</ecNumber>
    </recommendedName>
    <alternativeName>
        <fullName>AgGst1-alpha</fullName>
    </alternativeName>
    <alternativeName>
        <fullName>Aggst1-3</fullName>
    </alternativeName>
    <alternativeName>
        <fullName>GST class-theta</fullName>
    </alternativeName>
</protein>
<comment type="function">
    <text evidence="2">Conjugation of reduced glutathione to a wide number of exogenous and endogenous hydrophobic electrophiles.</text>
</comment>
<comment type="catalytic activity">
    <reaction evidence="2">
        <text>RX + glutathione = an S-substituted glutathione + a halide anion + H(+)</text>
        <dbReference type="Rhea" id="RHEA:16437"/>
        <dbReference type="ChEBI" id="CHEBI:15378"/>
        <dbReference type="ChEBI" id="CHEBI:16042"/>
        <dbReference type="ChEBI" id="CHEBI:17792"/>
        <dbReference type="ChEBI" id="CHEBI:57925"/>
        <dbReference type="ChEBI" id="CHEBI:90779"/>
        <dbReference type="EC" id="2.5.1.18"/>
    </reaction>
</comment>
<comment type="subunit">
    <text evidence="2">Homodimer.</text>
</comment>
<comment type="alternative products">
    <event type="alternative splicing"/>
    <isoform>
        <id>O77462-1</id>
        <name evidence="4">A</name>
        <name evidence="4">1-3</name>
        <sequence type="displayed"/>
    </isoform>
    <isoform>
        <id>O77473-1</id>
        <name evidence="4">B</name>
        <name evidence="4">1-4</name>
        <sequence type="external"/>
    </isoform>
    <isoform>
        <id>Q93112-1</id>
        <name evidence="4">C</name>
        <name evidence="4">1-5</name>
        <sequence type="external"/>
    </isoform>
    <isoform>
        <id>Q93113-1</id>
        <name evidence="4">D</name>
        <name>1-1</name>
        <name evidence="4">1-6</name>
        <name>2-1</name>
        <sequence type="external"/>
    </isoform>
</comment>
<comment type="similarity">
    <text evidence="3">Belongs to the GST superfamily. Theta family.</text>
</comment>
<comment type="sequence caution" evidence="6">
    <conflict type="frameshift">
        <sequence resource="EMBL-CDS" id="AAC79992"/>
    </conflict>
</comment>
<comment type="sequence caution" evidence="6">
    <conflict type="frameshift">
        <sequence resource="EMBL-CDS" id="AAC79999"/>
    </conflict>
</comment>
<organism>
    <name type="scientific">Anopheles gambiae</name>
    <name type="common">African malaria mosquito</name>
    <dbReference type="NCBI Taxonomy" id="7165"/>
    <lineage>
        <taxon>Eukaryota</taxon>
        <taxon>Metazoa</taxon>
        <taxon>Ecdysozoa</taxon>
        <taxon>Arthropoda</taxon>
        <taxon>Hexapoda</taxon>
        <taxon>Insecta</taxon>
        <taxon>Pterygota</taxon>
        <taxon>Neoptera</taxon>
        <taxon>Endopterygota</taxon>
        <taxon>Diptera</taxon>
        <taxon>Nematocera</taxon>
        <taxon>Culicoidea</taxon>
        <taxon>Culicidae</taxon>
        <taxon>Anophelinae</taxon>
        <taxon>Anopheles</taxon>
    </lineage>
</organism>
<proteinExistence type="evidence at transcript level"/>
<accession>O77462</accession>
<accession>Q5TTE8</accession>